<sequence>MNIIEANVATPDARVAITIARFNNFINDSLLEGAIDALKRIGQVKDENITVVWVPGAYELPLAAGALAKTGKYDAVIALGTVIRGGTAHFEYVAGGASNGLAHVAQDSEIPVAFGVLTTESIEQAIERAGTKAGNKGAEAALTALEMINVLKAIKA</sequence>
<proteinExistence type="inferred from homology"/>
<evidence type="ECO:0000255" key="1">
    <source>
        <dbReference type="HAMAP-Rule" id="MF_00178"/>
    </source>
</evidence>
<feature type="chain" id="PRO_1000040418" description="6,7-dimethyl-8-ribityllumazine synthase">
    <location>
        <begin position="1"/>
        <end position="156"/>
    </location>
</feature>
<feature type="active site" description="Proton donor" evidence="1">
    <location>
        <position position="89"/>
    </location>
</feature>
<feature type="binding site" evidence="1">
    <location>
        <position position="22"/>
    </location>
    <ligand>
        <name>5-amino-6-(D-ribitylamino)uracil</name>
        <dbReference type="ChEBI" id="CHEBI:15934"/>
    </ligand>
</feature>
<feature type="binding site" evidence="1">
    <location>
        <begin position="57"/>
        <end position="59"/>
    </location>
    <ligand>
        <name>5-amino-6-(D-ribitylamino)uracil</name>
        <dbReference type="ChEBI" id="CHEBI:15934"/>
    </ligand>
</feature>
<feature type="binding site" evidence="1">
    <location>
        <begin position="81"/>
        <end position="83"/>
    </location>
    <ligand>
        <name>5-amino-6-(D-ribitylamino)uracil</name>
        <dbReference type="ChEBI" id="CHEBI:15934"/>
    </ligand>
</feature>
<feature type="binding site" evidence="1">
    <location>
        <begin position="86"/>
        <end position="87"/>
    </location>
    <ligand>
        <name>(2S)-2-hydroxy-3-oxobutyl phosphate</name>
        <dbReference type="ChEBI" id="CHEBI:58830"/>
    </ligand>
</feature>
<feature type="binding site" evidence="1">
    <location>
        <position position="114"/>
    </location>
    <ligand>
        <name>5-amino-6-(D-ribitylamino)uracil</name>
        <dbReference type="ChEBI" id="CHEBI:15934"/>
    </ligand>
</feature>
<feature type="binding site" evidence="1">
    <location>
        <position position="128"/>
    </location>
    <ligand>
        <name>(2S)-2-hydroxy-3-oxobutyl phosphate</name>
        <dbReference type="ChEBI" id="CHEBI:58830"/>
    </ligand>
</feature>
<dbReference type="EC" id="2.5.1.78" evidence="1"/>
<dbReference type="EMBL" id="CP000247">
    <property type="protein sequence ID" value="ABG68505.1"/>
    <property type="molecule type" value="Genomic_DNA"/>
</dbReference>
<dbReference type="SMR" id="Q0TKM6"/>
<dbReference type="KEGG" id="ecp:ECP_0474"/>
<dbReference type="HOGENOM" id="CLU_089358_1_1_6"/>
<dbReference type="UniPathway" id="UPA00275">
    <property type="reaction ID" value="UER00404"/>
</dbReference>
<dbReference type="Proteomes" id="UP000009182">
    <property type="component" value="Chromosome"/>
</dbReference>
<dbReference type="GO" id="GO:0005829">
    <property type="term" value="C:cytosol"/>
    <property type="evidence" value="ECO:0007669"/>
    <property type="project" value="TreeGrafter"/>
</dbReference>
<dbReference type="GO" id="GO:0009349">
    <property type="term" value="C:riboflavin synthase complex"/>
    <property type="evidence" value="ECO:0007669"/>
    <property type="project" value="InterPro"/>
</dbReference>
<dbReference type="GO" id="GO:0000906">
    <property type="term" value="F:6,7-dimethyl-8-ribityllumazine synthase activity"/>
    <property type="evidence" value="ECO:0007669"/>
    <property type="project" value="UniProtKB-UniRule"/>
</dbReference>
<dbReference type="GO" id="GO:0009231">
    <property type="term" value="P:riboflavin biosynthetic process"/>
    <property type="evidence" value="ECO:0007669"/>
    <property type="project" value="UniProtKB-UniRule"/>
</dbReference>
<dbReference type="CDD" id="cd09209">
    <property type="entry name" value="Lumazine_synthase-I"/>
    <property type="match status" value="1"/>
</dbReference>
<dbReference type="FunFam" id="3.40.50.960:FF:000001">
    <property type="entry name" value="6,7-dimethyl-8-ribityllumazine synthase"/>
    <property type="match status" value="1"/>
</dbReference>
<dbReference type="Gene3D" id="3.40.50.960">
    <property type="entry name" value="Lumazine/riboflavin synthase"/>
    <property type="match status" value="1"/>
</dbReference>
<dbReference type="HAMAP" id="MF_00178">
    <property type="entry name" value="Lumazine_synth"/>
    <property type="match status" value="1"/>
</dbReference>
<dbReference type="InterPro" id="IPR034964">
    <property type="entry name" value="LS"/>
</dbReference>
<dbReference type="InterPro" id="IPR002180">
    <property type="entry name" value="LS/RS"/>
</dbReference>
<dbReference type="InterPro" id="IPR036467">
    <property type="entry name" value="LS/RS_sf"/>
</dbReference>
<dbReference type="NCBIfam" id="TIGR00114">
    <property type="entry name" value="lumazine-synth"/>
    <property type="match status" value="1"/>
</dbReference>
<dbReference type="NCBIfam" id="NF000812">
    <property type="entry name" value="PRK00061.1-4"/>
    <property type="match status" value="1"/>
</dbReference>
<dbReference type="PANTHER" id="PTHR21058:SF0">
    <property type="entry name" value="6,7-DIMETHYL-8-RIBITYLLUMAZINE SYNTHASE"/>
    <property type="match status" value="1"/>
</dbReference>
<dbReference type="PANTHER" id="PTHR21058">
    <property type="entry name" value="6,7-DIMETHYL-8-RIBITYLLUMAZINE SYNTHASE DMRL SYNTHASE LUMAZINE SYNTHASE"/>
    <property type="match status" value="1"/>
</dbReference>
<dbReference type="Pfam" id="PF00885">
    <property type="entry name" value="DMRL_synthase"/>
    <property type="match status" value="1"/>
</dbReference>
<dbReference type="SUPFAM" id="SSF52121">
    <property type="entry name" value="Lumazine synthase"/>
    <property type="match status" value="1"/>
</dbReference>
<accession>Q0TKM6</accession>
<protein>
    <recommendedName>
        <fullName evidence="1">6,7-dimethyl-8-ribityllumazine synthase</fullName>
        <shortName evidence="1">DMRL synthase</shortName>
        <shortName evidence="1">LS</shortName>
        <shortName evidence="1">Lumazine synthase</shortName>
        <ecNumber evidence="1">2.5.1.78</ecNumber>
    </recommendedName>
</protein>
<organism>
    <name type="scientific">Escherichia coli O6:K15:H31 (strain 536 / UPEC)</name>
    <dbReference type="NCBI Taxonomy" id="362663"/>
    <lineage>
        <taxon>Bacteria</taxon>
        <taxon>Pseudomonadati</taxon>
        <taxon>Pseudomonadota</taxon>
        <taxon>Gammaproteobacteria</taxon>
        <taxon>Enterobacterales</taxon>
        <taxon>Enterobacteriaceae</taxon>
        <taxon>Escherichia</taxon>
    </lineage>
</organism>
<comment type="function">
    <text evidence="1">Catalyzes the formation of 6,7-dimethyl-8-ribityllumazine by condensation of 5-amino-6-(D-ribitylamino)uracil with 3,4-dihydroxy-2-butanone 4-phosphate. This is the penultimate step in the biosynthesis of riboflavin.</text>
</comment>
<comment type="catalytic activity">
    <reaction evidence="1">
        <text>(2S)-2-hydroxy-3-oxobutyl phosphate + 5-amino-6-(D-ribitylamino)uracil = 6,7-dimethyl-8-(1-D-ribityl)lumazine + phosphate + 2 H2O + H(+)</text>
        <dbReference type="Rhea" id="RHEA:26152"/>
        <dbReference type="ChEBI" id="CHEBI:15377"/>
        <dbReference type="ChEBI" id="CHEBI:15378"/>
        <dbReference type="ChEBI" id="CHEBI:15934"/>
        <dbReference type="ChEBI" id="CHEBI:43474"/>
        <dbReference type="ChEBI" id="CHEBI:58201"/>
        <dbReference type="ChEBI" id="CHEBI:58830"/>
        <dbReference type="EC" id="2.5.1.78"/>
    </reaction>
</comment>
<comment type="pathway">
    <text evidence="1">Cofactor biosynthesis; riboflavin biosynthesis; riboflavin from 2-hydroxy-3-oxobutyl phosphate and 5-amino-6-(D-ribitylamino)uracil: step 1/2.</text>
</comment>
<comment type="subunit">
    <text evidence="1">Forms an icosahedral capsid composed of 60 subunits, arranged as a dodecamer of pentamers.</text>
</comment>
<comment type="similarity">
    <text evidence="1">Belongs to the DMRL synthase family.</text>
</comment>
<name>RISB_ECOL5</name>
<gene>
    <name evidence="1" type="primary">ribH</name>
    <name type="ordered locus">ECP_0474</name>
</gene>
<reference key="1">
    <citation type="journal article" date="2006" name="Mol. Microbiol.">
        <title>Role of pathogenicity island-associated integrases in the genome plasticity of uropathogenic Escherichia coli strain 536.</title>
        <authorList>
            <person name="Hochhut B."/>
            <person name="Wilde C."/>
            <person name="Balling G."/>
            <person name="Middendorf B."/>
            <person name="Dobrindt U."/>
            <person name="Brzuszkiewicz E."/>
            <person name="Gottschalk G."/>
            <person name="Carniel E."/>
            <person name="Hacker J."/>
        </authorList>
    </citation>
    <scope>NUCLEOTIDE SEQUENCE [LARGE SCALE GENOMIC DNA]</scope>
    <source>
        <strain>536 / UPEC</strain>
    </source>
</reference>
<keyword id="KW-0686">Riboflavin biosynthesis</keyword>
<keyword id="KW-0808">Transferase</keyword>